<gene>
    <name type="primary">ATG18F</name>
    <name type="ordered locus">At5g54730</name>
    <name type="ORF">K5F14.9</name>
</gene>
<sequence>MKKNGDGSSPKSPDGVVSRSARSSFRALSNCLKVISSGASTVARSAVSAASSAVESHHDQVLWAGFDNLQKEDGDTRRVLLLAFKSGFQVWDVEDTENVHVIVSAHDGQAFFMQMLLNPINSGVLDDRFYKSRPLLAVCGDYSSKKISSDNPGSETVATPTNVYVYSLKSQSYVHTLKFRATIYSVRCCSRIVAVLQAAQIDCFDAATLEMDYRIVTNSIVCGSLGVGYGPLAVGPRWIAYSGSRIATSSSAIFTSEIVSLSTSSPSVAQFARDSSKQLASGIANLGDKGYRSLTKYCSEVLPNPYIPGLKGIGVGNEKVADAESIGMVIVKDITNKSVITQFKAHKSPISALCFDQSGLLLVTASIQGHNINVFRIMPTISTSRAVKTTTFAHLFRLQRGFTNAVIQDICFSKDSNLIVVGSSRGTSHLFEINPEKEGDAPVPMSAISRIRSGNSSGWIGTVSGAASAAAGMVAGSVPGTVTSTFCYCDEKSNNNYYGSVADMCSKTNLLVFAPSGCMTQYALREHQVGVGHETAAMTGFDSESGLETEGKLAVDPIRRWSMIQNQSRRETHDPHSDIYGGGTSVDSKSKVFPEVVRKQSVEEAWKVSKKGTTRVVDKRHLYIYEAEQQQTHLPTQLPLWARRKFRFQELVLNRGEEISGGGGREMEIEGIQTRTIEARTRDLVPVWGYLQSPRSQQVINESIQSPSTTTQDDKVATLEGHGTETDLGAVHSEEQTQSEPVDKEGIAEEKNHSEDEDEEQVD</sequence>
<evidence type="ECO:0000250" key="1"/>
<evidence type="ECO:0000256" key="2">
    <source>
        <dbReference type="SAM" id="MobiDB-lite"/>
    </source>
</evidence>
<evidence type="ECO:0000269" key="3">
    <source>
    </source>
</evidence>
<evidence type="ECO:0000305" key="4"/>
<protein>
    <recommendedName>
        <fullName>Autophagy-related protein 18f</fullName>
        <shortName>AtATG18f</shortName>
    </recommendedName>
</protein>
<proteinExistence type="evidence at transcript level"/>
<dbReference type="EMBL" id="AB022214">
    <property type="protein sequence ID" value="BAB09939.1"/>
    <property type="molecule type" value="Genomic_DNA"/>
</dbReference>
<dbReference type="EMBL" id="CP002688">
    <property type="protein sequence ID" value="AED96531.1"/>
    <property type="molecule type" value="Genomic_DNA"/>
</dbReference>
<dbReference type="FunCoup" id="Q9FH32">
    <property type="interactions" value="114"/>
</dbReference>
<dbReference type="STRING" id="3702.Q9FH32"/>
<dbReference type="iPTMnet" id="Q9FH32"/>
<dbReference type="PaxDb" id="3702-AT5G54730.1"/>
<dbReference type="ProteomicsDB" id="246602"/>
<dbReference type="EnsemblPlants" id="AT5G54730.1">
    <property type="protein sequence ID" value="AT5G54730.1"/>
    <property type="gene ID" value="AT5G54730"/>
</dbReference>
<dbReference type="GeneID" id="835562"/>
<dbReference type="Gramene" id="AT5G54730.1">
    <property type="protein sequence ID" value="AT5G54730.1"/>
    <property type="gene ID" value="AT5G54730"/>
</dbReference>
<dbReference type="KEGG" id="ath:AT5G54730"/>
<dbReference type="Araport" id="AT5G54730"/>
<dbReference type="TAIR" id="AT5G54730">
    <property type="gene designation" value="G18F"/>
</dbReference>
<dbReference type="eggNOG" id="KOG2109">
    <property type="taxonomic scope" value="Eukaryota"/>
</dbReference>
<dbReference type="HOGENOM" id="CLU_003829_2_0_1"/>
<dbReference type="InParanoid" id="Q9FH32"/>
<dbReference type="OMA" id="HMYISEV"/>
<dbReference type="PhylomeDB" id="Q9FH32"/>
<dbReference type="PRO" id="PR:Q9FH32"/>
<dbReference type="Proteomes" id="UP000006548">
    <property type="component" value="Chromosome 5"/>
</dbReference>
<dbReference type="ExpressionAtlas" id="Q9FH32">
    <property type="expression patterns" value="baseline and differential"/>
</dbReference>
<dbReference type="GO" id="GO:0034045">
    <property type="term" value="C:phagophore assembly site membrane"/>
    <property type="evidence" value="ECO:0007669"/>
    <property type="project" value="UniProtKB-SubCell"/>
</dbReference>
<dbReference type="GO" id="GO:0005774">
    <property type="term" value="C:vacuolar membrane"/>
    <property type="evidence" value="ECO:0007669"/>
    <property type="project" value="UniProtKB-SubCell"/>
</dbReference>
<dbReference type="GO" id="GO:0006914">
    <property type="term" value="P:autophagy"/>
    <property type="evidence" value="ECO:0007669"/>
    <property type="project" value="UniProtKB-KW"/>
</dbReference>
<dbReference type="GO" id="GO:0015031">
    <property type="term" value="P:protein transport"/>
    <property type="evidence" value="ECO:0007669"/>
    <property type="project" value="UniProtKB-KW"/>
</dbReference>
<dbReference type="GO" id="GO:0042594">
    <property type="term" value="P:response to starvation"/>
    <property type="evidence" value="ECO:0000270"/>
    <property type="project" value="TAIR"/>
</dbReference>
<dbReference type="Gene3D" id="2.130.10.10">
    <property type="entry name" value="YVTN repeat-like/Quinoprotein amine dehydrogenase"/>
    <property type="match status" value="1"/>
</dbReference>
<dbReference type="InterPro" id="IPR045142">
    <property type="entry name" value="BCAS3-like"/>
</dbReference>
<dbReference type="InterPro" id="IPR022175">
    <property type="entry name" value="BCAS3_dom"/>
</dbReference>
<dbReference type="InterPro" id="IPR048382">
    <property type="entry name" value="BCAS3_WD40"/>
</dbReference>
<dbReference type="InterPro" id="IPR015943">
    <property type="entry name" value="WD40/YVTN_repeat-like_dom_sf"/>
</dbReference>
<dbReference type="InterPro" id="IPR036322">
    <property type="entry name" value="WD40_repeat_dom_sf"/>
</dbReference>
<dbReference type="InterPro" id="IPR001680">
    <property type="entry name" value="WD40_rpt"/>
</dbReference>
<dbReference type="PANTHER" id="PTHR13268:SF7">
    <property type="entry name" value="AUTOPHAGY-RELATED PROTEIN 18F"/>
    <property type="match status" value="1"/>
</dbReference>
<dbReference type="PANTHER" id="PTHR13268">
    <property type="entry name" value="BREAST CARCINOMA AMPLIFIED SEQUENCE 3"/>
    <property type="match status" value="1"/>
</dbReference>
<dbReference type="Pfam" id="PF12490">
    <property type="entry name" value="BCAS3"/>
    <property type="match status" value="1"/>
</dbReference>
<dbReference type="Pfam" id="PF21034">
    <property type="entry name" value="BCAS3_WD40"/>
    <property type="match status" value="1"/>
</dbReference>
<dbReference type="SMART" id="SM00320">
    <property type="entry name" value="WD40"/>
    <property type="match status" value="2"/>
</dbReference>
<dbReference type="SUPFAM" id="SSF50978">
    <property type="entry name" value="WD40 repeat-like"/>
    <property type="match status" value="1"/>
</dbReference>
<name>AT18F_ARATH</name>
<feature type="chain" id="PRO_0000421884" description="Autophagy-related protein 18f">
    <location>
        <begin position="1"/>
        <end position="763"/>
    </location>
</feature>
<feature type="repeat" description="WD 1">
    <location>
        <begin position="345"/>
        <end position="385"/>
    </location>
</feature>
<feature type="repeat" description="WD 2">
    <location>
        <begin position="402"/>
        <end position="441"/>
    </location>
</feature>
<feature type="region of interest" description="Disordered" evidence="2">
    <location>
        <begin position="701"/>
        <end position="763"/>
    </location>
</feature>
<feature type="compositionally biased region" description="Polar residues" evidence="2">
    <location>
        <begin position="701"/>
        <end position="711"/>
    </location>
</feature>
<feature type="compositionally biased region" description="Basic and acidic residues" evidence="2">
    <location>
        <begin position="712"/>
        <end position="725"/>
    </location>
</feature>
<feature type="compositionally biased region" description="Basic and acidic residues" evidence="2">
    <location>
        <begin position="741"/>
        <end position="754"/>
    </location>
</feature>
<keyword id="KW-0072">Autophagy</keyword>
<keyword id="KW-0472">Membrane</keyword>
<keyword id="KW-0653">Protein transport</keyword>
<keyword id="KW-1185">Reference proteome</keyword>
<keyword id="KW-0677">Repeat</keyword>
<keyword id="KW-0813">Transport</keyword>
<keyword id="KW-0926">Vacuole</keyword>
<keyword id="KW-0853">WD repeat</keyword>
<organism>
    <name type="scientific">Arabidopsis thaliana</name>
    <name type="common">Mouse-ear cress</name>
    <dbReference type="NCBI Taxonomy" id="3702"/>
    <lineage>
        <taxon>Eukaryota</taxon>
        <taxon>Viridiplantae</taxon>
        <taxon>Streptophyta</taxon>
        <taxon>Embryophyta</taxon>
        <taxon>Tracheophyta</taxon>
        <taxon>Spermatophyta</taxon>
        <taxon>Magnoliopsida</taxon>
        <taxon>eudicotyledons</taxon>
        <taxon>Gunneridae</taxon>
        <taxon>Pentapetalae</taxon>
        <taxon>rosids</taxon>
        <taxon>malvids</taxon>
        <taxon>Brassicales</taxon>
        <taxon>Brassicaceae</taxon>
        <taxon>Camelineae</taxon>
        <taxon>Arabidopsis</taxon>
    </lineage>
</organism>
<reference key="1">
    <citation type="journal article" date="2000" name="DNA Res.">
        <title>Structural analysis of Arabidopsis thaliana chromosome 5. X. Sequence features of the regions of 3,076,755 bp covered by sixty P1 and TAC clones.</title>
        <authorList>
            <person name="Sato S."/>
            <person name="Nakamura Y."/>
            <person name="Kaneko T."/>
            <person name="Katoh T."/>
            <person name="Asamizu E."/>
            <person name="Kotani H."/>
            <person name="Tabata S."/>
        </authorList>
    </citation>
    <scope>NUCLEOTIDE SEQUENCE [LARGE SCALE GENOMIC DNA]</scope>
    <source>
        <strain>cv. Columbia</strain>
    </source>
</reference>
<reference key="2">
    <citation type="journal article" date="2017" name="Plant J.">
        <title>Araport11: a complete reannotation of the Arabidopsis thaliana reference genome.</title>
        <authorList>
            <person name="Cheng C.Y."/>
            <person name="Krishnakumar V."/>
            <person name="Chan A.P."/>
            <person name="Thibaud-Nissen F."/>
            <person name="Schobel S."/>
            <person name="Town C.D."/>
        </authorList>
    </citation>
    <scope>GENOME REANNOTATION</scope>
    <source>
        <strain>cv. Columbia</strain>
    </source>
</reference>
<reference key="3">
    <citation type="journal article" date="2005" name="Plant J.">
        <title>AtATG18a is required for the formation of autophagosomes during nutrient stress and senescence in Arabidopsis thaliana.</title>
        <authorList>
            <person name="Xiong Y."/>
            <person name="Contento A.L."/>
            <person name="Bassham D.C."/>
        </authorList>
    </citation>
    <scope>GENE FAMILY</scope>
    <scope>INDUCTION</scope>
    <scope>TISSUE SPECIFICITY</scope>
</reference>
<accession>Q9FH32</accession>
<comment type="function">
    <text evidence="1">The PI(3,5)P2 regulatory complex regulates both the synthesis and turnover of phosphatidylinositol 3,5-bisphosphate (PtdIns(3,5)P2). Required for autophagy (By similarity).</text>
</comment>
<comment type="subunit">
    <text evidence="1">Component of the PI(3,5)P2 regulatory complex at least composed of ATG18, SAC/FIG4, FAB1 and VAC14.</text>
</comment>
<comment type="subcellular location">
    <subcellularLocation>
        <location evidence="1">Preautophagosomal structure membrane</location>
        <topology evidence="1">Peripheral membrane protein</topology>
    </subcellularLocation>
    <subcellularLocation>
        <location evidence="1">Vacuole membrane</location>
        <topology evidence="1">Peripheral membrane protein</topology>
    </subcellularLocation>
    <text evidence="1">Peripheral membrane protein of pre-autophagosomal structure (PAS) and vacuole.</text>
</comment>
<comment type="tissue specificity">
    <text evidence="3">Expressed in roots, flowers and leaves.</text>
</comment>
<comment type="induction">
    <text evidence="3">By sucrose and nitrogen starvation.</text>
</comment>
<comment type="domain">
    <text evidence="1">The first protein part may form a beta-propeller domain involved in specific binding to phosphatidylinositol 3,5-bisphosphate (PIP2), leading to the association of the protein to the membrane.</text>
</comment>
<comment type="similarity">
    <text evidence="4">Belongs to the WD repeat PROPPIN family.</text>
</comment>